<sequence>MKNINPTQTSAWQALQNHFDAMKEVTLAELFAKDADRFGKFSATFNDQMLVDYSKNRITEETLSKLLDLAKETDLAGAIKSMFSGEKINRTEDRAVLHVALRNRSNTPILVDGKDVMPEVNAVLEKMKKFSEAIISGEWKGYTGKPITDVVNIGIGGSDLGPFMVTEALRPYKNHLNMHFVSNVDGTHIAEVLKKVNPESTLFLVASKTFTTQETMTNAHSARDWFLKTAGDEKHVAKHFAALSTNAKAVGEFGIDTANMFEFWDWVGGRYSLWSAIGLSIILSVGYDNFVELLSGAHEMDKHFSTTPFEKNLPVLLALIGIWYNNFFGAETEAILPYDQYMHRFAAYFQQGNMESNGKYVDRNGNAVDYQTGPIIWGEPGTNGQHAFYQLIHQGTKLVPCDFIAPAITHNPLSDHHQKLLSNFFAQTEALAFGKSRDVVEQEFRDQGKDPAQLENVVPFKVFEGNRPTNSILLREITPFSLGALIALYEHKIFTQGAILNIFTFDQWGVELGKQLANRILPELGDNKEIASHDSSTNGLINRYKAWRG</sequence>
<accession>A7MPC2</accession>
<dbReference type="EC" id="5.3.1.9" evidence="1"/>
<dbReference type="EMBL" id="CP000783">
    <property type="protein sequence ID" value="ABU75374.1"/>
    <property type="molecule type" value="Genomic_DNA"/>
</dbReference>
<dbReference type="RefSeq" id="WP_004387524.1">
    <property type="nucleotide sequence ID" value="NC_009778.1"/>
</dbReference>
<dbReference type="SMR" id="A7MPC2"/>
<dbReference type="KEGG" id="esa:ESA_00069"/>
<dbReference type="HOGENOM" id="CLU_017947_3_1_6"/>
<dbReference type="UniPathway" id="UPA00109">
    <property type="reaction ID" value="UER00181"/>
</dbReference>
<dbReference type="UniPathway" id="UPA00138"/>
<dbReference type="Proteomes" id="UP000000260">
    <property type="component" value="Chromosome"/>
</dbReference>
<dbReference type="GO" id="GO:0005829">
    <property type="term" value="C:cytosol"/>
    <property type="evidence" value="ECO:0007669"/>
    <property type="project" value="TreeGrafter"/>
</dbReference>
<dbReference type="GO" id="GO:0097367">
    <property type="term" value="F:carbohydrate derivative binding"/>
    <property type="evidence" value="ECO:0007669"/>
    <property type="project" value="InterPro"/>
</dbReference>
<dbReference type="GO" id="GO:0004347">
    <property type="term" value="F:glucose-6-phosphate isomerase activity"/>
    <property type="evidence" value="ECO:0007669"/>
    <property type="project" value="UniProtKB-UniRule"/>
</dbReference>
<dbReference type="GO" id="GO:0048029">
    <property type="term" value="F:monosaccharide binding"/>
    <property type="evidence" value="ECO:0007669"/>
    <property type="project" value="TreeGrafter"/>
</dbReference>
<dbReference type="GO" id="GO:0006094">
    <property type="term" value="P:gluconeogenesis"/>
    <property type="evidence" value="ECO:0007669"/>
    <property type="project" value="UniProtKB-UniRule"/>
</dbReference>
<dbReference type="GO" id="GO:0051156">
    <property type="term" value="P:glucose 6-phosphate metabolic process"/>
    <property type="evidence" value="ECO:0007669"/>
    <property type="project" value="TreeGrafter"/>
</dbReference>
<dbReference type="GO" id="GO:0006096">
    <property type="term" value="P:glycolytic process"/>
    <property type="evidence" value="ECO:0007669"/>
    <property type="project" value="UniProtKB-UniRule"/>
</dbReference>
<dbReference type="CDD" id="cd05015">
    <property type="entry name" value="SIS_PGI_1"/>
    <property type="match status" value="1"/>
</dbReference>
<dbReference type="CDD" id="cd05016">
    <property type="entry name" value="SIS_PGI_2"/>
    <property type="match status" value="1"/>
</dbReference>
<dbReference type="FunFam" id="1.10.1390.10:FF:000001">
    <property type="entry name" value="Glucose-6-phosphate isomerase"/>
    <property type="match status" value="1"/>
</dbReference>
<dbReference type="FunFam" id="3.40.50.10490:FF:000004">
    <property type="entry name" value="Glucose-6-phosphate isomerase"/>
    <property type="match status" value="1"/>
</dbReference>
<dbReference type="Gene3D" id="1.10.1390.10">
    <property type="match status" value="1"/>
</dbReference>
<dbReference type="Gene3D" id="3.40.50.10490">
    <property type="entry name" value="Glucose-6-phosphate isomerase like protein, domain 1"/>
    <property type="match status" value="2"/>
</dbReference>
<dbReference type="HAMAP" id="MF_00473">
    <property type="entry name" value="G6P_isomerase"/>
    <property type="match status" value="1"/>
</dbReference>
<dbReference type="InterPro" id="IPR001672">
    <property type="entry name" value="G6P_Isomerase"/>
</dbReference>
<dbReference type="InterPro" id="IPR023096">
    <property type="entry name" value="G6P_Isomerase_C"/>
</dbReference>
<dbReference type="InterPro" id="IPR018189">
    <property type="entry name" value="Phosphoglucose_isomerase_CS"/>
</dbReference>
<dbReference type="InterPro" id="IPR046348">
    <property type="entry name" value="SIS_dom_sf"/>
</dbReference>
<dbReference type="InterPro" id="IPR035476">
    <property type="entry name" value="SIS_PGI_1"/>
</dbReference>
<dbReference type="InterPro" id="IPR035482">
    <property type="entry name" value="SIS_PGI_2"/>
</dbReference>
<dbReference type="NCBIfam" id="NF001211">
    <property type="entry name" value="PRK00179.1"/>
    <property type="match status" value="1"/>
</dbReference>
<dbReference type="PANTHER" id="PTHR11469">
    <property type="entry name" value="GLUCOSE-6-PHOSPHATE ISOMERASE"/>
    <property type="match status" value="1"/>
</dbReference>
<dbReference type="PANTHER" id="PTHR11469:SF1">
    <property type="entry name" value="GLUCOSE-6-PHOSPHATE ISOMERASE"/>
    <property type="match status" value="1"/>
</dbReference>
<dbReference type="Pfam" id="PF00342">
    <property type="entry name" value="PGI"/>
    <property type="match status" value="1"/>
</dbReference>
<dbReference type="PRINTS" id="PR00662">
    <property type="entry name" value="G6PISOMERASE"/>
</dbReference>
<dbReference type="SUPFAM" id="SSF53697">
    <property type="entry name" value="SIS domain"/>
    <property type="match status" value="1"/>
</dbReference>
<dbReference type="PROSITE" id="PS00765">
    <property type="entry name" value="P_GLUCOSE_ISOMERASE_1"/>
    <property type="match status" value="1"/>
</dbReference>
<dbReference type="PROSITE" id="PS00174">
    <property type="entry name" value="P_GLUCOSE_ISOMERASE_2"/>
    <property type="match status" value="1"/>
</dbReference>
<dbReference type="PROSITE" id="PS51463">
    <property type="entry name" value="P_GLUCOSE_ISOMERASE_3"/>
    <property type="match status" value="1"/>
</dbReference>
<name>G6PI_CROS8</name>
<reference key="1">
    <citation type="journal article" date="2010" name="PLoS ONE">
        <title>Genome sequence of Cronobacter sakazakii BAA-894 and comparative genomic hybridization analysis with other Cronobacter species.</title>
        <authorList>
            <person name="Kucerova E."/>
            <person name="Clifton S.W."/>
            <person name="Xia X.Q."/>
            <person name="Long F."/>
            <person name="Porwollik S."/>
            <person name="Fulton L."/>
            <person name="Fronick C."/>
            <person name="Minx P."/>
            <person name="Kyung K."/>
            <person name="Warren W."/>
            <person name="Fulton R."/>
            <person name="Feng D."/>
            <person name="Wollam A."/>
            <person name="Shah N."/>
            <person name="Bhonagiri V."/>
            <person name="Nash W.E."/>
            <person name="Hallsworth-Pepin K."/>
            <person name="Wilson R.K."/>
            <person name="McClelland M."/>
            <person name="Forsythe S.J."/>
        </authorList>
    </citation>
    <scope>NUCLEOTIDE SEQUENCE [LARGE SCALE GENOMIC DNA]</scope>
    <source>
        <strain>ATCC BAA-894</strain>
    </source>
</reference>
<organism>
    <name type="scientific">Cronobacter sakazakii (strain ATCC BAA-894)</name>
    <name type="common">Enterobacter sakazakii</name>
    <dbReference type="NCBI Taxonomy" id="290339"/>
    <lineage>
        <taxon>Bacteria</taxon>
        <taxon>Pseudomonadati</taxon>
        <taxon>Pseudomonadota</taxon>
        <taxon>Gammaproteobacteria</taxon>
        <taxon>Enterobacterales</taxon>
        <taxon>Enterobacteriaceae</taxon>
        <taxon>Cronobacter</taxon>
    </lineage>
</organism>
<protein>
    <recommendedName>
        <fullName evidence="1">Glucose-6-phosphate isomerase</fullName>
        <shortName evidence="1">GPI</shortName>
        <ecNumber evidence="1">5.3.1.9</ecNumber>
    </recommendedName>
    <alternativeName>
        <fullName evidence="1">Phosphoglucose isomerase</fullName>
        <shortName evidence="1">PGI</shortName>
    </alternativeName>
    <alternativeName>
        <fullName evidence="1">Phosphohexose isomerase</fullName>
        <shortName evidence="1">PHI</shortName>
    </alternativeName>
</protein>
<feature type="chain" id="PRO_1000013963" description="Glucose-6-phosphate isomerase">
    <location>
        <begin position="1"/>
        <end position="549"/>
    </location>
</feature>
<feature type="active site" description="Proton donor" evidence="1">
    <location>
        <position position="355"/>
    </location>
</feature>
<feature type="active site" evidence="1">
    <location>
        <position position="386"/>
    </location>
</feature>
<feature type="active site" evidence="1">
    <location>
        <position position="514"/>
    </location>
</feature>
<comment type="function">
    <text evidence="1">Catalyzes the reversible isomerization of glucose-6-phosphate to fructose-6-phosphate.</text>
</comment>
<comment type="catalytic activity">
    <reaction evidence="1">
        <text>alpha-D-glucose 6-phosphate = beta-D-fructose 6-phosphate</text>
        <dbReference type="Rhea" id="RHEA:11816"/>
        <dbReference type="ChEBI" id="CHEBI:57634"/>
        <dbReference type="ChEBI" id="CHEBI:58225"/>
        <dbReference type="EC" id="5.3.1.9"/>
    </reaction>
</comment>
<comment type="pathway">
    <text evidence="1">Carbohydrate biosynthesis; gluconeogenesis.</text>
</comment>
<comment type="pathway">
    <text evidence="1">Carbohydrate degradation; glycolysis; D-glyceraldehyde 3-phosphate and glycerone phosphate from D-glucose: step 2/4.</text>
</comment>
<comment type="subcellular location">
    <subcellularLocation>
        <location evidence="1">Cytoplasm</location>
    </subcellularLocation>
</comment>
<comment type="similarity">
    <text evidence="1">Belongs to the GPI family.</text>
</comment>
<keyword id="KW-0963">Cytoplasm</keyword>
<keyword id="KW-0312">Gluconeogenesis</keyword>
<keyword id="KW-0324">Glycolysis</keyword>
<keyword id="KW-0413">Isomerase</keyword>
<keyword id="KW-1185">Reference proteome</keyword>
<evidence type="ECO:0000255" key="1">
    <source>
        <dbReference type="HAMAP-Rule" id="MF_00473"/>
    </source>
</evidence>
<proteinExistence type="inferred from homology"/>
<gene>
    <name evidence="1" type="primary">pgi</name>
    <name type="ordered locus">ESA_00069</name>
</gene>